<sequence length="239" mass="26162">MNSNTHAKSSNFHQSELDKFAALANRWWDADGPQKPLHALNPVRLEYVSTRLELAGARVLDVGCGGGLLSESMARLGAQVTAIDLAPELVKVARLHSLESGVQVDYRVQSVEDLAAEQPGSFDTVTCMEMLEHVPDPTAIIRACASLLKPGGKLFLSTLNRTPAAFALAVVGAEYIARLLPKGTHHYKDFIKPAELAAWLRNAGLQLEDVSGMLYEPWRNRARLSSRTEVNYLAYAVKP</sequence>
<dbReference type="EC" id="2.1.1.222" evidence="1"/>
<dbReference type="EC" id="2.1.1.64" evidence="1"/>
<dbReference type="EMBL" id="AM039952">
    <property type="protein sequence ID" value="CAJ24251.1"/>
    <property type="molecule type" value="Genomic_DNA"/>
</dbReference>
<dbReference type="RefSeq" id="WP_011347726.1">
    <property type="nucleotide sequence ID" value="NZ_CP017190.1"/>
</dbReference>
<dbReference type="SMR" id="Q3BSF8"/>
<dbReference type="STRING" id="456327.BJD11_10025"/>
<dbReference type="GeneID" id="97510705"/>
<dbReference type="KEGG" id="xcv:XCV2574"/>
<dbReference type="eggNOG" id="COG2227">
    <property type="taxonomic scope" value="Bacteria"/>
</dbReference>
<dbReference type="HOGENOM" id="CLU_042432_5_0_6"/>
<dbReference type="UniPathway" id="UPA00232"/>
<dbReference type="Proteomes" id="UP000007069">
    <property type="component" value="Chromosome"/>
</dbReference>
<dbReference type="GO" id="GO:0102208">
    <property type="term" value="F:2-polyprenyl-6-hydroxyphenol methylase activity"/>
    <property type="evidence" value="ECO:0007669"/>
    <property type="project" value="UniProtKB-EC"/>
</dbReference>
<dbReference type="GO" id="GO:0061542">
    <property type="term" value="F:3-demethylubiquinol 3-O-methyltransferase activity"/>
    <property type="evidence" value="ECO:0007669"/>
    <property type="project" value="UniProtKB-UniRule"/>
</dbReference>
<dbReference type="GO" id="GO:0010420">
    <property type="term" value="F:polyprenyldihydroxybenzoate methyltransferase activity"/>
    <property type="evidence" value="ECO:0007669"/>
    <property type="project" value="InterPro"/>
</dbReference>
<dbReference type="GO" id="GO:0032259">
    <property type="term" value="P:methylation"/>
    <property type="evidence" value="ECO:0007669"/>
    <property type="project" value="UniProtKB-KW"/>
</dbReference>
<dbReference type="CDD" id="cd02440">
    <property type="entry name" value="AdoMet_MTases"/>
    <property type="match status" value="1"/>
</dbReference>
<dbReference type="FunFam" id="3.40.50.150:FF:000028">
    <property type="entry name" value="Ubiquinone biosynthesis O-methyltransferase"/>
    <property type="match status" value="1"/>
</dbReference>
<dbReference type="Gene3D" id="3.40.50.150">
    <property type="entry name" value="Vaccinia Virus protein VP39"/>
    <property type="match status" value="1"/>
</dbReference>
<dbReference type="HAMAP" id="MF_00472">
    <property type="entry name" value="UbiG"/>
    <property type="match status" value="1"/>
</dbReference>
<dbReference type="InterPro" id="IPR029063">
    <property type="entry name" value="SAM-dependent_MTases_sf"/>
</dbReference>
<dbReference type="InterPro" id="IPR010233">
    <property type="entry name" value="UbiG_MeTrfase"/>
</dbReference>
<dbReference type="NCBIfam" id="TIGR01983">
    <property type="entry name" value="UbiG"/>
    <property type="match status" value="1"/>
</dbReference>
<dbReference type="PANTHER" id="PTHR43464">
    <property type="entry name" value="METHYLTRANSFERASE"/>
    <property type="match status" value="1"/>
</dbReference>
<dbReference type="PANTHER" id="PTHR43464:SF19">
    <property type="entry name" value="UBIQUINONE BIOSYNTHESIS O-METHYLTRANSFERASE, MITOCHONDRIAL"/>
    <property type="match status" value="1"/>
</dbReference>
<dbReference type="Pfam" id="PF13489">
    <property type="entry name" value="Methyltransf_23"/>
    <property type="match status" value="1"/>
</dbReference>
<dbReference type="SUPFAM" id="SSF53335">
    <property type="entry name" value="S-adenosyl-L-methionine-dependent methyltransferases"/>
    <property type="match status" value="1"/>
</dbReference>
<feature type="chain" id="PRO_0000241745" description="Ubiquinone biosynthesis O-methyltransferase">
    <location>
        <begin position="1"/>
        <end position="239"/>
    </location>
</feature>
<feature type="binding site" evidence="1">
    <location>
        <position position="44"/>
    </location>
    <ligand>
        <name>S-adenosyl-L-methionine</name>
        <dbReference type="ChEBI" id="CHEBI:59789"/>
    </ligand>
</feature>
<feature type="binding site" evidence="1">
    <location>
        <position position="63"/>
    </location>
    <ligand>
        <name>S-adenosyl-L-methionine</name>
        <dbReference type="ChEBI" id="CHEBI:59789"/>
    </ligand>
</feature>
<feature type="binding site" evidence="1">
    <location>
        <position position="84"/>
    </location>
    <ligand>
        <name>S-adenosyl-L-methionine</name>
        <dbReference type="ChEBI" id="CHEBI:59789"/>
    </ligand>
</feature>
<feature type="binding site" evidence="1">
    <location>
        <position position="128"/>
    </location>
    <ligand>
        <name>S-adenosyl-L-methionine</name>
        <dbReference type="ChEBI" id="CHEBI:59789"/>
    </ligand>
</feature>
<proteinExistence type="inferred from homology"/>
<organism>
    <name type="scientific">Xanthomonas euvesicatoria pv. vesicatoria (strain 85-10)</name>
    <name type="common">Xanthomonas campestris pv. vesicatoria</name>
    <dbReference type="NCBI Taxonomy" id="316273"/>
    <lineage>
        <taxon>Bacteria</taxon>
        <taxon>Pseudomonadati</taxon>
        <taxon>Pseudomonadota</taxon>
        <taxon>Gammaproteobacteria</taxon>
        <taxon>Lysobacterales</taxon>
        <taxon>Lysobacteraceae</taxon>
        <taxon>Xanthomonas</taxon>
    </lineage>
</organism>
<name>UBIG_XANE5</name>
<keyword id="KW-0489">Methyltransferase</keyword>
<keyword id="KW-0949">S-adenosyl-L-methionine</keyword>
<keyword id="KW-0808">Transferase</keyword>
<keyword id="KW-0831">Ubiquinone biosynthesis</keyword>
<comment type="function">
    <text evidence="1">O-methyltransferase that catalyzes the 2 O-methylation steps in the ubiquinone biosynthetic pathway.</text>
</comment>
<comment type="catalytic activity">
    <reaction evidence="1">
        <text>a 3-demethylubiquinol + S-adenosyl-L-methionine = a ubiquinol + S-adenosyl-L-homocysteine + H(+)</text>
        <dbReference type="Rhea" id="RHEA:44380"/>
        <dbReference type="Rhea" id="RHEA-COMP:9566"/>
        <dbReference type="Rhea" id="RHEA-COMP:10914"/>
        <dbReference type="ChEBI" id="CHEBI:15378"/>
        <dbReference type="ChEBI" id="CHEBI:17976"/>
        <dbReference type="ChEBI" id="CHEBI:57856"/>
        <dbReference type="ChEBI" id="CHEBI:59789"/>
        <dbReference type="ChEBI" id="CHEBI:84422"/>
        <dbReference type="EC" id="2.1.1.64"/>
    </reaction>
</comment>
<comment type="catalytic activity">
    <reaction evidence="1">
        <text>a 3-(all-trans-polyprenyl)benzene-1,2-diol + S-adenosyl-L-methionine = a 2-methoxy-6-(all-trans-polyprenyl)phenol + S-adenosyl-L-homocysteine + H(+)</text>
        <dbReference type="Rhea" id="RHEA:31411"/>
        <dbReference type="Rhea" id="RHEA-COMP:9550"/>
        <dbReference type="Rhea" id="RHEA-COMP:9551"/>
        <dbReference type="ChEBI" id="CHEBI:15378"/>
        <dbReference type="ChEBI" id="CHEBI:57856"/>
        <dbReference type="ChEBI" id="CHEBI:59789"/>
        <dbReference type="ChEBI" id="CHEBI:62729"/>
        <dbReference type="ChEBI" id="CHEBI:62731"/>
        <dbReference type="EC" id="2.1.1.222"/>
    </reaction>
</comment>
<comment type="pathway">
    <text evidence="1">Cofactor biosynthesis; ubiquinone biosynthesis.</text>
</comment>
<comment type="similarity">
    <text evidence="1">Belongs to the methyltransferase superfamily. UbiG/COQ3 family.</text>
</comment>
<reference key="1">
    <citation type="journal article" date="2005" name="J. Bacteriol.">
        <title>Insights into genome plasticity and pathogenicity of the plant pathogenic Bacterium Xanthomonas campestris pv. vesicatoria revealed by the complete genome sequence.</title>
        <authorList>
            <person name="Thieme F."/>
            <person name="Koebnik R."/>
            <person name="Bekel T."/>
            <person name="Berger C."/>
            <person name="Boch J."/>
            <person name="Buettner D."/>
            <person name="Caldana C."/>
            <person name="Gaigalat L."/>
            <person name="Goesmann A."/>
            <person name="Kay S."/>
            <person name="Kirchner O."/>
            <person name="Lanz C."/>
            <person name="Linke B."/>
            <person name="McHardy A.C."/>
            <person name="Meyer F."/>
            <person name="Mittenhuber G."/>
            <person name="Nies D.H."/>
            <person name="Niesbach-Kloesgen U."/>
            <person name="Patschkowski T."/>
            <person name="Rueckert C."/>
            <person name="Rupp O."/>
            <person name="Schneiker S."/>
            <person name="Schuster S.C."/>
            <person name="Vorhoelter F.J."/>
            <person name="Weber E."/>
            <person name="Puehler A."/>
            <person name="Bonas U."/>
            <person name="Bartels D."/>
            <person name="Kaiser O."/>
        </authorList>
    </citation>
    <scope>NUCLEOTIDE SEQUENCE [LARGE SCALE GENOMIC DNA]</scope>
    <source>
        <strain>85-10</strain>
    </source>
</reference>
<accession>Q3BSF8</accession>
<evidence type="ECO:0000255" key="1">
    <source>
        <dbReference type="HAMAP-Rule" id="MF_00472"/>
    </source>
</evidence>
<gene>
    <name evidence="1" type="primary">ubiG</name>
    <name type="ordered locus">XCV2574</name>
</gene>
<protein>
    <recommendedName>
        <fullName evidence="1">Ubiquinone biosynthesis O-methyltransferase</fullName>
    </recommendedName>
    <alternativeName>
        <fullName evidence="1">2-polyprenyl-6-hydroxyphenol methylase</fullName>
        <ecNumber evidence="1">2.1.1.222</ecNumber>
    </alternativeName>
    <alternativeName>
        <fullName evidence="1">3-demethylubiquinone 3-O-methyltransferase</fullName>
        <ecNumber evidence="1">2.1.1.64</ecNumber>
    </alternativeName>
</protein>